<reference key="1">
    <citation type="submission" date="2006-12" db="EMBL/GenBank/DDBJ databases">
        <title>Complete sequence of chromosome 1 of Nocardioides sp. JS614.</title>
        <authorList>
            <person name="Copeland A."/>
            <person name="Lucas S."/>
            <person name="Lapidus A."/>
            <person name="Barry K."/>
            <person name="Detter J.C."/>
            <person name="Glavina del Rio T."/>
            <person name="Hammon N."/>
            <person name="Israni S."/>
            <person name="Dalin E."/>
            <person name="Tice H."/>
            <person name="Pitluck S."/>
            <person name="Thompson L.S."/>
            <person name="Brettin T."/>
            <person name="Bruce D."/>
            <person name="Han C."/>
            <person name="Tapia R."/>
            <person name="Schmutz J."/>
            <person name="Larimer F."/>
            <person name="Land M."/>
            <person name="Hauser L."/>
            <person name="Kyrpides N."/>
            <person name="Kim E."/>
            <person name="Mattes T."/>
            <person name="Gossett J."/>
            <person name="Richardson P."/>
        </authorList>
    </citation>
    <scope>NUCLEOTIDE SEQUENCE [LARGE SCALE GENOMIC DNA]</scope>
    <source>
        <strain>ATCC BAA-499 / JS614</strain>
    </source>
</reference>
<proteinExistence type="inferred from homology"/>
<feature type="chain" id="PRO_0000291503" description="Putative glutamate--cysteine ligase 2-1">
    <location>
        <begin position="1"/>
        <end position="382"/>
    </location>
</feature>
<keyword id="KW-0067">ATP-binding</keyword>
<keyword id="KW-0436">Ligase</keyword>
<keyword id="KW-0547">Nucleotide-binding</keyword>
<keyword id="KW-1185">Reference proteome</keyword>
<protein>
    <recommendedName>
        <fullName evidence="1">Putative glutamate--cysteine ligase 2-1</fullName>
        <ecNumber evidence="1">6.3.2.2</ecNumber>
    </recommendedName>
    <alternativeName>
        <fullName evidence="1">Gamma-glutamylcysteine synthetase 2-1</fullName>
        <shortName evidence="1">GCS 2-1</shortName>
        <shortName evidence="1">Gamma-GCS 2-1</shortName>
    </alternativeName>
</protein>
<name>GCS21_NOCSJ</name>
<comment type="function">
    <text evidence="1">ATP-dependent carboxylate-amine ligase which exhibits weak glutamate--cysteine ligase activity.</text>
</comment>
<comment type="catalytic activity">
    <reaction evidence="1">
        <text>L-cysteine + L-glutamate + ATP = gamma-L-glutamyl-L-cysteine + ADP + phosphate + H(+)</text>
        <dbReference type="Rhea" id="RHEA:13285"/>
        <dbReference type="ChEBI" id="CHEBI:15378"/>
        <dbReference type="ChEBI" id="CHEBI:29985"/>
        <dbReference type="ChEBI" id="CHEBI:30616"/>
        <dbReference type="ChEBI" id="CHEBI:35235"/>
        <dbReference type="ChEBI" id="CHEBI:43474"/>
        <dbReference type="ChEBI" id="CHEBI:58173"/>
        <dbReference type="ChEBI" id="CHEBI:456216"/>
        <dbReference type="EC" id="6.3.2.2"/>
    </reaction>
</comment>
<comment type="similarity">
    <text evidence="1">Belongs to the glutamate--cysteine ligase type 2 family. YbdK subfamily.</text>
</comment>
<dbReference type="EC" id="6.3.2.2" evidence="1"/>
<dbReference type="EMBL" id="CP000509">
    <property type="protein sequence ID" value="ABL82472.1"/>
    <property type="molecule type" value="Genomic_DNA"/>
</dbReference>
<dbReference type="SMR" id="A1SKY7"/>
<dbReference type="STRING" id="196162.Noca_2970"/>
<dbReference type="KEGG" id="nca:Noca_2970"/>
<dbReference type="eggNOG" id="COG2170">
    <property type="taxonomic scope" value="Bacteria"/>
</dbReference>
<dbReference type="HOGENOM" id="CLU_044848_0_0_11"/>
<dbReference type="OrthoDB" id="9803842at2"/>
<dbReference type="Proteomes" id="UP000000640">
    <property type="component" value="Chromosome"/>
</dbReference>
<dbReference type="GO" id="GO:0005524">
    <property type="term" value="F:ATP binding"/>
    <property type="evidence" value="ECO:0007669"/>
    <property type="project" value="UniProtKB-KW"/>
</dbReference>
<dbReference type="GO" id="GO:0004357">
    <property type="term" value="F:glutamate-cysteine ligase activity"/>
    <property type="evidence" value="ECO:0007669"/>
    <property type="project" value="UniProtKB-EC"/>
</dbReference>
<dbReference type="GO" id="GO:0042398">
    <property type="term" value="P:modified amino acid biosynthetic process"/>
    <property type="evidence" value="ECO:0007669"/>
    <property type="project" value="InterPro"/>
</dbReference>
<dbReference type="Gene3D" id="3.30.590.20">
    <property type="match status" value="1"/>
</dbReference>
<dbReference type="HAMAP" id="MF_01609">
    <property type="entry name" value="Glu_cys_ligase_2"/>
    <property type="match status" value="1"/>
</dbReference>
<dbReference type="InterPro" id="IPR050141">
    <property type="entry name" value="GCL_type2/YbdK_subfam"/>
</dbReference>
<dbReference type="InterPro" id="IPR006336">
    <property type="entry name" value="GCS2"/>
</dbReference>
<dbReference type="InterPro" id="IPR014746">
    <property type="entry name" value="Gln_synth/guanido_kin_cat_dom"/>
</dbReference>
<dbReference type="InterPro" id="IPR011793">
    <property type="entry name" value="YbdK"/>
</dbReference>
<dbReference type="NCBIfam" id="TIGR02050">
    <property type="entry name" value="gshA_cyan_rel"/>
    <property type="match status" value="1"/>
</dbReference>
<dbReference type="NCBIfam" id="NF010041">
    <property type="entry name" value="PRK13517.1-1"/>
    <property type="match status" value="1"/>
</dbReference>
<dbReference type="PANTHER" id="PTHR36510">
    <property type="entry name" value="GLUTAMATE--CYSTEINE LIGASE 2-RELATED"/>
    <property type="match status" value="1"/>
</dbReference>
<dbReference type="PANTHER" id="PTHR36510:SF1">
    <property type="entry name" value="GLUTAMATE--CYSTEINE LIGASE 2-RELATED"/>
    <property type="match status" value="1"/>
</dbReference>
<dbReference type="Pfam" id="PF04107">
    <property type="entry name" value="GCS2"/>
    <property type="match status" value="1"/>
</dbReference>
<dbReference type="SUPFAM" id="SSF55931">
    <property type="entry name" value="Glutamine synthetase/guanido kinase"/>
    <property type="match status" value="1"/>
</dbReference>
<accession>A1SKY7</accession>
<organism>
    <name type="scientific">Nocardioides sp. (strain ATCC BAA-499 / JS614)</name>
    <dbReference type="NCBI Taxonomy" id="196162"/>
    <lineage>
        <taxon>Bacteria</taxon>
        <taxon>Bacillati</taxon>
        <taxon>Actinomycetota</taxon>
        <taxon>Actinomycetes</taxon>
        <taxon>Propionibacteriales</taxon>
        <taxon>Nocardioidaceae</taxon>
        <taxon>Nocardioides</taxon>
    </lineage>
</organism>
<gene>
    <name type="ordered locus">Noca_2970</name>
</gene>
<sequence length="382" mass="41061">MVRKLGIEEELLLFDPESGEVVPAAPSVLKEFREHGPGRQRARAATDELDQELFRHQLETRTDPVRRAADALDQLVAARRTAGEAARAAGYAAGACGIVPLGGDRSVVSPNDRYRDMVDTYGEIARTGGTCGMHVHVDIGSDEEGVAVVDRIAPWLPVLVALAANSPYVEGRDSGYASWRAQVWARWPSAGPTEQFGSVAGYREVCRMLLDVGAARDPGMLYFDARLSTGQPTVEVRVCDVGTDPAVAVTIGALVRALVETAAEEWADGRPAAHWRAEALRAAHWRASRFGMADSLVHPLARGLRPARSVVAALVEAVEPALAAAGDLELVDVQLERAVNDNGATRQRAAFERTGSVRGVVDDVIARTEASWQDHDSHAGRL</sequence>
<evidence type="ECO:0000255" key="1">
    <source>
        <dbReference type="HAMAP-Rule" id="MF_01609"/>
    </source>
</evidence>